<sequence length="711" mass="78798">MAQSSLVAAAGRSGRVIGDYAVGRQIGSGSFSVVWEGRHLVHGTVVAIKEIAMARLNKKLQESLMSEIIILRKINHPNIIRFIDMIEAPGKINLVLEYCKGGDLSMYIHKHGSVPEATAKHFMLQLAAGLQVLRDNNIIHRDLKPQNLLLSTDDNDAALKIADFGFARSLQPRGLAETLCGSPLYMAPEIMQLQKYDAKADLWSVGAILFQLVTGRTPFTGNSQIQLLQNIIRSTELHFPADCRDLSTDCKDLCQKLLRRNPVERLTFEEFFHHPFLSDKQSYDFTRSRLDSRTMNDFHSSGSSPSRNIEEISQEDGLPFFLDDDSSGPEGSPSSFKHTSPMKSSYGFSVERREAALSPLKNMDLSSRYSRVSHRAETNNFKFEGHRLSDRSQFKPSSLPDSRSFSTQGRGDSPDSMDQDYVLISGPPVDIPSSSSGSPKPFNYPFKSHSPPVEFIKRNVTNLTAPMPIASATGNNLSRFGSLESQNCIPGTSHGSLDLVDAFEQPSTNSLTRIRSLQKCAAAIAELVHERGENGKHLEAFSIQLVILAIWNQALHICHTQAVSGIEGSLLQDINRVGRNISHGGSEKLLPQIQKEFVQEVERAEELAKFVESDNAKMPDAMEMILQAALALGISGGVDEVMGDAENAGNLYSKAVRLLVFLAVEAQTLILNPPLTLTNSVRYRLRTYIDSLITRLKHLQSHRRTSYPQKQ</sequence>
<reference key="1">
    <citation type="journal article" date="2000" name="Nature">
        <title>Sequence and analysis of chromosome 3 of the plant Arabidopsis thaliana.</title>
        <authorList>
            <person name="Salanoubat M."/>
            <person name="Lemcke K."/>
            <person name="Rieger M."/>
            <person name="Ansorge W."/>
            <person name="Unseld M."/>
            <person name="Fartmann B."/>
            <person name="Valle G."/>
            <person name="Bloecker H."/>
            <person name="Perez-Alonso M."/>
            <person name="Obermaier B."/>
            <person name="Delseny M."/>
            <person name="Boutry M."/>
            <person name="Grivell L.A."/>
            <person name="Mache R."/>
            <person name="Puigdomenech P."/>
            <person name="De Simone V."/>
            <person name="Choisne N."/>
            <person name="Artiguenave F."/>
            <person name="Robert C."/>
            <person name="Brottier P."/>
            <person name="Wincker P."/>
            <person name="Cattolico L."/>
            <person name="Weissenbach J."/>
            <person name="Saurin W."/>
            <person name="Quetier F."/>
            <person name="Schaefer M."/>
            <person name="Mueller-Auer S."/>
            <person name="Gabel C."/>
            <person name="Fuchs M."/>
            <person name="Benes V."/>
            <person name="Wurmbach E."/>
            <person name="Drzonek H."/>
            <person name="Erfle H."/>
            <person name="Jordan N."/>
            <person name="Bangert S."/>
            <person name="Wiedelmann R."/>
            <person name="Kranz H."/>
            <person name="Voss H."/>
            <person name="Holland R."/>
            <person name="Brandt P."/>
            <person name="Nyakatura G."/>
            <person name="Vezzi A."/>
            <person name="D'Angelo M."/>
            <person name="Pallavicini A."/>
            <person name="Toppo S."/>
            <person name="Simionati B."/>
            <person name="Conrad A."/>
            <person name="Hornischer K."/>
            <person name="Kauer G."/>
            <person name="Loehnert T.-H."/>
            <person name="Nordsiek G."/>
            <person name="Reichelt J."/>
            <person name="Scharfe M."/>
            <person name="Schoen O."/>
            <person name="Bargues M."/>
            <person name="Terol J."/>
            <person name="Climent J."/>
            <person name="Navarro P."/>
            <person name="Collado C."/>
            <person name="Perez-Perez A."/>
            <person name="Ottenwaelder B."/>
            <person name="Duchemin D."/>
            <person name="Cooke R."/>
            <person name="Laudie M."/>
            <person name="Berger-Llauro C."/>
            <person name="Purnelle B."/>
            <person name="Masuy D."/>
            <person name="de Haan M."/>
            <person name="Maarse A.C."/>
            <person name="Alcaraz J.-P."/>
            <person name="Cottet A."/>
            <person name="Casacuberta E."/>
            <person name="Monfort A."/>
            <person name="Argiriou A."/>
            <person name="Flores M."/>
            <person name="Liguori R."/>
            <person name="Vitale D."/>
            <person name="Mannhaupt G."/>
            <person name="Haase D."/>
            <person name="Schoof H."/>
            <person name="Rudd S."/>
            <person name="Zaccaria P."/>
            <person name="Mewes H.-W."/>
            <person name="Mayer K.F.X."/>
            <person name="Kaul S."/>
            <person name="Town C.D."/>
            <person name="Koo H.L."/>
            <person name="Tallon L.J."/>
            <person name="Jenkins J."/>
            <person name="Rooney T."/>
            <person name="Rizzo M."/>
            <person name="Walts A."/>
            <person name="Utterback T."/>
            <person name="Fujii C.Y."/>
            <person name="Shea T.P."/>
            <person name="Creasy T.H."/>
            <person name="Haas B."/>
            <person name="Maiti R."/>
            <person name="Wu D."/>
            <person name="Peterson J."/>
            <person name="Van Aken S."/>
            <person name="Pai G."/>
            <person name="Militscher J."/>
            <person name="Sellers P."/>
            <person name="Gill J.E."/>
            <person name="Feldblyum T.V."/>
            <person name="Preuss D."/>
            <person name="Lin X."/>
            <person name="Nierman W.C."/>
            <person name="Salzberg S.L."/>
            <person name="White O."/>
            <person name="Venter J.C."/>
            <person name="Fraser C.M."/>
            <person name="Kaneko T."/>
            <person name="Nakamura Y."/>
            <person name="Sato S."/>
            <person name="Kato T."/>
            <person name="Asamizu E."/>
            <person name="Sasamoto S."/>
            <person name="Kimura T."/>
            <person name="Idesawa K."/>
            <person name="Kawashima K."/>
            <person name="Kishida Y."/>
            <person name="Kiyokawa C."/>
            <person name="Kohara M."/>
            <person name="Matsumoto M."/>
            <person name="Matsuno A."/>
            <person name="Muraki A."/>
            <person name="Nakayama S."/>
            <person name="Nakazaki N."/>
            <person name="Shinpo S."/>
            <person name="Takeuchi C."/>
            <person name="Wada T."/>
            <person name="Watanabe A."/>
            <person name="Yamada M."/>
            <person name="Yasuda M."/>
            <person name="Tabata S."/>
        </authorList>
    </citation>
    <scope>NUCLEOTIDE SEQUENCE [LARGE SCALE GENOMIC DNA]</scope>
    <source>
        <strain>cv. Columbia</strain>
    </source>
</reference>
<reference key="2">
    <citation type="journal article" date="2017" name="Plant J.">
        <title>Araport11: a complete reannotation of the Arabidopsis thaliana reference genome.</title>
        <authorList>
            <person name="Cheng C.Y."/>
            <person name="Krishnakumar V."/>
            <person name="Chan A.P."/>
            <person name="Thibaud-Nissen F."/>
            <person name="Schobel S."/>
            <person name="Town C.D."/>
        </authorList>
    </citation>
    <scope>GENOME REANNOTATION</scope>
    <source>
        <strain>cv. Columbia</strain>
    </source>
</reference>
<reference key="3">
    <citation type="journal article" date="2003" name="Science">
        <title>Empirical analysis of transcriptional activity in the Arabidopsis genome.</title>
        <authorList>
            <person name="Yamada K."/>
            <person name="Lim J."/>
            <person name="Dale J.M."/>
            <person name="Chen H."/>
            <person name="Shinn P."/>
            <person name="Palm C.J."/>
            <person name="Southwick A.M."/>
            <person name="Wu H.C."/>
            <person name="Kim C.J."/>
            <person name="Nguyen M."/>
            <person name="Pham P.K."/>
            <person name="Cheuk R.F."/>
            <person name="Karlin-Newmann G."/>
            <person name="Liu S.X."/>
            <person name="Lam B."/>
            <person name="Sakano H."/>
            <person name="Wu T."/>
            <person name="Yu G."/>
            <person name="Miranda M."/>
            <person name="Quach H.L."/>
            <person name="Tripp M."/>
            <person name="Chang C.H."/>
            <person name="Lee J.M."/>
            <person name="Toriumi M.J."/>
            <person name="Chan M.M."/>
            <person name="Tang C.C."/>
            <person name="Onodera C.S."/>
            <person name="Deng J.M."/>
            <person name="Akiyama K."/>
            <person name="Ansari Y."/>
            <person name="Arakawa T."/>
            <person name="Banh J."/>
            <person name="Banno F."/>
            <person name="Bowser L."/>
            <person name="Brooks S.Y."/>
            <person name="Carninci P."/>
            <person name="Chao Q."/>
            <person name="Choy N."/>
            <person name="Enju A."/>
            <person name="Goldsmith A.D."/>
            <person name="Gurjal M."/>
            <person name="Hansen N.F."/>
            <person name="Hayashizaki Y."/>
            <person name="Johnson-Hopson C."/>
            <person name="Hsuan V.W."/>
            <person name="Iida K."/>
            <person name="Karnes M."/>
            <person name="Khan S."/>
            <person name="Koesema E."/>
            <person name="Ishida J."/>
            <person name="Jiang P.X."/>
            <person name="Jones T."/>
            <person name="Kawai J."/>
            <person name="Kamiya A."/>
            <person name="Meyers C."/>
            <person name="Nakajima M."/>
            <person name="Narusaka M."/>
            <person name="Seki M."/>
            <person name="Sakurai T."/>
            <person name="Satou M."/>
            <person name="Tamse R."/>
            <person name="Vaysberg M."/>
            <person name="Wallender E.K."/>
            <person name="Wong C."/>
            <person name="Yamamura Y."/>
            <person name="Yuan S."/>
            <person name="Shinozaki K."/>
            <person name="Davis R.W."/>
            <person name="Theologis A."/>
            <person name="Ecker J.R."/>
        </authorList>
    </citation>
    <scope>NUCLEOTIDE SEQUENCE [LARGE SCALE MRNA]</scope>
    <source>
        <strain>cv. Columbia</strain>
    </source>
</reference>
<reference key="4">
    <citation type="journal article" date="2002" name="Science">
        <title>Functional annotation of a full-length Arabidopsis cDNA collection.</title>
        <authorList>
            <person name="Seki M."/>
            <person name="Narusaka M."/>
            <person name="Kamiya A."/>
            <person name="Ishida J."/>
            <person name="Satou M."/>
            <person name="Sakurai T."/>
            <person name="Nakajima M."/>
            <person name="Enju A."/>
            <person name="Akiyama K."/>
            <person name="Oono Y."/>
            <person name="Muramatsu M."/>
            <person name="Hayashizaki Y."/>
            <person name="Kawai J."/>
            <person name="Carninci P."/>
            <person name="Itoh M."/>
            <person name="Ishii Y."/>
            <person name="Arakawa T."/>
            <person name="Shibata K."/>
            <person name="Shinagawa A."/>
            <person name="Shinozaki K."/>
        </authorList>
    </citation>
    <scope>NUCLEOTIDE SEQUENCE [LARGE SCALE MRNA] OF 53-711</scope>
    <source>
        <strain>cv. Columbia</strain>
    </source>
</reference>
<reference key="5">
    <citation type="journal article" date="2002" name="Plant Physiol.">
        <title>Leaf senescence and starvation-induced chlorosis are accelerated by the disruption of an Arabidopsis autophagy gene.</title>
        <authorList>
            <person name="Hanaoka H."/>
            <person name="Noda T."/>
            <person name="Shirano Y."/>
            <person name="Kato T."/>
            <person name="Hayashi H."/>
            <person name="Shibata D."/>
            <person name="Tabata S."/>
            <person name="Ohsumi Y."/>
        </authorList>
    </citation>
    <scope>GENE FAMILY</scope>
    <scope>NOMENCLATURE</scope>
</reference>
<reference key="6">
    <citation type="journal article" date="2007" name="Autophagy">
        <title>ATG genes involved in non-selective autophagy are conserved from yeast to man, but the selective Cvt and pexophagy pathways also require organism-specific genes.</title>
        <authorList>
            <person name="Meijer W.H."/>
            <person name="van der Klei I.J."/>
            <person name="Veenhuis M."/>
            <person name="Kiel J.A.K.W."/>
        </authorList>
    </citation>
    <scope>GENE FAMILY</scope>
    <scope>NOMENCLATURE</scope>
</reference>
<proteinExistence type="evidence at transcript level"/>
<accession>F4JBP3</accession>
<accession>Q8GWX7</accession>
<accession>Q9M334</accession>
<feature type="chain" id="PRO_0000434620" description="Serine/threonine-protein kinase ATG1b">
    <location>
        <begin position="1"/>
        <end position="711"/>
    </location>
</feature>
<feature type="domain" description="Protein kinase" evidence="2">
    <location>
        <begin position="20"/>
        <end position="277"/>
    </location>
</feature>
<feature type="region of interest" description="Disordered" evidence="3">
    <location>
        <begin position="318"/>
        <end position="342"/>
    </location>
</feature>
<feature type="region of interest" description="Disordered" evidence="3">
    <location>
        <begin position="383"/>
        <end position="419"/>
    </location>
</feature>
<feature type="short sequence motif" description="AIM (Atg8-family-interacting motif)" evidence="1">
    <location>
        <begin position="421"/>
        <end position="424"/>
    </location>
</feature>
<feature type="compositionally biased region" description="Basic and acidic residues" evidence="3">
    <location>
        <begin position="383"/>
        <end position="393"/>
    </location>
</feature>
<feature type="compositionally biased region" description="Polar residues" evidence="3">
    <location>
        <begin position="394"/>
        <end position="410"/>
    </location>
</feature>
<feature type="active site" description="Proton acceptor" evidence="2">
    <location>
        <position position="142"/>
    </location>
</feature>
<feature type="binding site" evidence="2">
    <location>
        <begin position="26"/>
        <end position="34"/>
    </location>
    <ligand>
        <name>ATP</name>
        <dbReference type="ChEBI" id="CHEBI:30616"/>
    </ligand>
</feature>
<feature type="binding site" evidence="2">
    <location>
        <position position="49"/>
    </location>
    <ligand>
        <name>ATP</name>
        <dbReference type="ChEBI" id="CHEBI:30616"/>
    </ligand>
</feature>
<protein>
    <recommendedName>
        <fullName evidence="6">Serine/threonine-protein kinase ATG1b</fullName>
        <ecNumber>2.7.11.-</ecNumber>
    </recommendedName>
    <alternativeName>
        <fullName evidence="4">Autophagy-related protein 1b</fullName>
        <shortName evidence="4">AtAPG1b</shortName>
    </alternativeName>
</protein>
<comment type="function">
    <text evidence="1">Serine/threonine protein kinase involved in autophagy. The ATG1-ATG13 protein kinase complex regulates downstream events required for autophagosome enclosure and/or vacuolar delivery.</text>
</comment>
<comment type="subcellular location">
    <subcellularLocation>
        <location evidence="1">Cytoplasmic vesicle</location>
        <location evidence="1">Autophagosome</location>
    </subcellularLocation>
</comment>
<comment type="alternative products">
    <event type="alternative splicing"/>
    <isoform>
        <id>F4JBP3-1</id>
        <name>1</name>
        <sequence type="displayed"/>
    </isoform>
    <text evidence="6">A number of isoforms are produced. According to EST sequences.</text>
</comment>
<comment type="similarity">
    <text evidence="2">Belongs to the protein kinase superfamily. Ser/Thr protein kinase family.</text>
</comment>
<comment type="sequence caution" evidence="6">
    <conflict type="erroneous initiation">
        <sequence resource="EMBL-CDS" id="AAO64880"/>
    </conflict>
    <text>Truncated N-terminus.</text>
</comment>
<comment type="sequence caution" evidence="6">
    <conflict type="erroneous gene model prediction">
        <sequence resource="EMBL-CDS" id="CAB88355"/>
    </conflict>
</comment>
<gene>
    <name evidence="5" type="primary">ATG1B</name>
    <name evidence="7" type="ordered locus">At3g53930</name>
    <name evidence="8" type="ORF">F5K20_230</name>
</gene>
<name>ATG1B_ARATH</name>
<evidence type="ECO:0000250" key="1">
    <source>
        <dbReference type="UniProtKB" id="Q94C95"/>
    </source>
</evidence>
<evidence type="ECO:0000255" key="2">
    <source>
        <dbReference type="PROSITE-ProRule" id="PRU00159"/>
    </source>
</evidence>
<evidence type="ECO:0000256" key="3">
    <source>
        <dbReference type="SAM" id="MobiDB-lite"/>
    </source>
</evidence>
<evidence type="ECO:0000303" key="4">
    <source>
    </source>
</evidence>
<evidence type="ECO:0000303" key="5">
    <source>
    </source>
</evidence>
<evidence type="ECO:0000305" key="6"/>
<evidence type="ECO:0000312" key="7">
    <source>
        <dbReference type="Araport" id="AT3G53930"/>
    </source>
</evidence>
<evidence type="ECO:0000312" key="8">
    <source>
        <dbReference type="EMBL" id="CAB88355.1"/>
    </source>
</evidence>
<dbReference type="EC" id="2.7.11.-"/>
<dbReference type="EMBL" id="AL132960">
    <property type="protein sequence ID" value="CAB88355.1"/>
    <property type="status" value="ALT_SEQ"/>
    <property type="molecule type" value="Genomic_DNA"/>
</dbReference>
<dbReference type="EMBL" id="CP002686">
    <property type="protein sequence ID" value="AEE79160.1"/>
    <property type="molecule type" value="Genomic_DNA"/>
</dbReference>
<dbReference type="EMBL" id="BT005945">
    <property type="protein sequence ID" value="AAO64880.1"/>
    <property type="status" value="ALT_INIT"/>
    <property type="molecule type" value="mRNA"/>
</dbReference>
<dbReference type="EMBL" id="AK118572">
    <property type="protein sequence ID" value="BAC43172.1"/>
    <property type="molecule type" value="mRNA"/>
</dbReference>
<dbReference type="PIR" id="T45933">
    <property type="entry name" value="T45933"/>
</dbReference>
<dbReference type="RefSeq" id="NP_190961.2">
    <molecule id="F4JBP3-1"/>
    <property type="nucleotide sequence ID" value="NM_115253.3"/>
</dbReference>
<dbReference type="SMR" id="F4JBP3"/>
<dbReference type="FunCoup" id="F4JBP3">
    <property type="interactions" value="979"/>
</dbReference>
<dbReference type="IntAct" id="F4JBP3">
    <property type="interactions" value="1"/>
</dbReference>
<dbReference type="STRING" id="3702.F4JBP3"/>
<dbReference type="iPTMnet" id="F4JBP3"/>
<dbReference type="PaxDb" id="3702-AT3G53930.2"/>
<dbReference type="EnsemblPlants" id="AT3G53930.1">
    <molecule id="F4JBP3-1"/>
    <property type="protein sequence ID" value="AT3G53930.1"/>
    <property type="gene ID" value="AT3G53930"/>
</dbReference>
<dbReference type="GeneID" id="824560"/>
<dbReference type="Gramene" id="AT3G53930.1">
    <molecule id="F4JBP3-1"/>
    <property type="protein sequence ID" value="AT3G53930.1"/>
    <property type="gene ID" value="AT3G53930"/>
</dbReference>
<dbReference type="KEGG" id="ath:AT3G53930"/>
<dbReference type="Araport" id="AT3G53930"/>
<dbReference type="TAIR" id="AT3G53930">
    <property type="gene designation" value="ATG1B"/>
</dbReference>
<dbReference type="eggNOG" id="KOG0595">
    <property type="taxonomic scope" value="Eukaryota"/>
</dbReference>
<dbReference type="InParanoid" id="F4JBP3"/>
<dbReference type="OMA" id="HIERAFL"/>
<dbReference type="OrthoDB" id="346907at2759"/>
<dbReference type="PRO" id="PR:F4JBP3"/>
<dbReference type="Proteomes" id="UP000006548">
    <property type="component" value="Chromosome 3"/>
</dbReference>
<dbReference type="ExpressionAtlas" id="F4JBP3">
    <property type="expression patterns" value="baseline and differential"/>
</dbReference>
<dbReference type="GO" id="GO:0005776">
    <property type="term" value="C:autophagosome"/>
    <property type="evidence" value="ECO:0007669"/>
    <property type="project" value="UniProtKB-SubCell"/>
</dbReference>
<dbReference type="GO" id="GO:0031410">
    <property type="term" value="C:cytoplasmic vesicle"/>
    <property type="evidence" value="ECO:0007669"/>
    <property type="project" value="UniProtKB-KW"/>
</dbReference>
<dbReference type="GO" id="GO:0005524">
    <property type="term" value="F:ATP binding"/>
    <property type="evidence" value="ECO:0007669"/>
    <property type="project" value="UniProtKB-KW"/>
</dbReference>
<dbReference type="GO" id="GO:0004674">
    <property type="term" value="F:protein serine/threonine kinase activity"/>
    <property type="evidence" value="ECO:0007669"/>
    <property type="project" value="UniProtKB-KW"/>
</dbReference>
<dbReference type="GO" id="GO:0006914">
    <property type="term" value="P:autophagy"/>
    <property type="evidence" value="ECO:0007669"/>
    <property type="project" value="UniProtKB-KW"/>
</dbReference>
<dbReference type="GO" id="GO:0015031">
    <property type="term" value="P:protein transport"/>
    <property type="evidence" value="ECO:0007669"/>
    <property type="project" value="UniProtKB-KW"/>
</dbReference>
<dbReference type="GO" id="GO:0010506">
    <property type="term" value="P:regulation of autophagy"/>
    <property type="evidence" value="ECO:0007669"/>
    <property type="project" value="InterPro"/>
</dbReference>
<dbReference type="CDD" id="cd14009">
    <property type="entry name" value="STKc_ATG1_ULK_like"/>
    <property type="match status" value="1"/>
</dbReference>
<dbReference type="FunFam" id="3.30.200.20:FF:000042">
    <property type="entry name" value="Aurora kinase A"/>
    <property type="match status" value="1"/>
</dbReference>
<dbReference type="FunFam" id="1.10.510.10:FF:000548">
    <property type="entry name" value="Serine/threonine-protein kinase ATG1"/>
    <property type="match status" value="1"/>
</dbReference>
<dbReference type="Gene3D" id="1.10.510.10">
    <property type="entry name" value="Transferase(Phosphotransferase) domain 1"/>
    <property type="match status" value="1"/>
</dbReference>
<dbReference type="InterPro" id="IPR045269">
    <property type="entry name" value="Atg1-like"/>
</dbReference>
<dbReference type="InterPro" id="IPR011009">
    <property type="entry name" value="Kinase-like_dom_sf"/>
</dbReference>
<dbReference type="InterPro" id="IPR056281">
    <property type="entry name" value="MIT_ATG1a/b/c"/>
</dbReference>
<dbReference type="InterPro" id="IPR000719">
    <property type="entry name" value="Prot_kinase_dom"/>
</dbReference>
<dbReference type="InterPro" id="IPR017441">
    <property type="entry name" value="Protein_kinase_ATP_BS"/>
</dbReference>
<dbReference type="InterPro" id="IPR008271">
    <property type="entry name" value="Ser/Thr_kinase_AS"/>
</dbReference>
<dbReference type="PANTHER" id="PTHR24348">
    <property type="entry name" value="SERINE/THREONINE-PROTEIN KINASE UNC-51-RELATED"/>
    <property type="match status" value="1"/>
</dbReference>
<dbReference type="PANTHER" id="PTHR24348:SF52">
    <property type="entry name" value="SERINE_THREONINE-PROTEIN KINASE ATG1B"/>
    <property type="match status" value="1"/>
</dbReference>
<dbReference type="Pfam" id="PF24497">
    <property type="entry name" value="MIT_ATG1"/>
    <property type="match status" value="1"/>
</dbReference>
<dbReference type="Pfam" id="PF00069">
    <property type="entry name" value="Pkinase"/>
    <property type="match status" value="1"/>
</dbReference>
<dbReference type="SMART" id="SM00220">
    <property type="entry name" value="S_TKc"/>
    <property type="match status" value="1"/>
</dbReference>
<dbReference type="SUPFAM" id="SSF56112">
    <property type="entry name" value="Protein kinase-like (PK-like)"/>
    <property type="match status" value="1"/>
</dbReference>
<dbReference type="PROSITE" id="PS00107">
    <property type="entry name" value="PROTEIN_KINASE_ATP"/>
    <property type="match status" value="1"/>
</dbReference>
<dbReference type="PROSITE" id="PS50011">
    <property type="entry name" value="PROTEIN_KINASE_DOM"/>
    <property type="match status" value="1"/>
</dbReference>
<dbReference type="PROSITE" id="PS00108">
    <property type="entry name" value="PROTEIN_KINASE_ST"/>
    <property type="match status" value="1"/>
</dbReference>
<keyword id="KW-0025">Alternative splicing</keyword>
<keyword id="KW-0067">ATP-binding</keyword>
<keyword id="KW-0072">Autophagy</keyword>
<keyword id="KW-0968">Cytoplasmic vesicle</keyword>
<keyword id="KW-0418">Kinase</keyword>
<keyword id="KW-0547">Nucleotide-binding</keyword>
<keyword id="KW-0653">Protein transport</keyword>
<keyword id="KW-1185">Reference proteome</keyword>
<keyword id="KW-0723">Serine/threonine-protein kinase</keyword>
<keyword id="KW-0808">Transferase</keyword>
<keyword id="KW-0813">Transport</keyword>
<organism>
    <name type="scientific">Arabidopsis thaliana</name>
    <name type="common">Mouse-ear cress</name>
    <dbReference type="NCBI Taxonomy" id="3702"/>
    <lineage>
        <taxon>Eukaryota</taxon>
        <taxon>Viridiplantae</taxon>
        <taxon>Streptophyta</taxon>
        <taxon>Embryophyta</taxon>
        <taxon>Tracheophyta</taxon>
        <taxon>Spermatophyta</taxon>
        <taxon>Magnoliopsida</taxon>
        <taxon>eudicotyledons</taxon>
        <taxon>Gunneridae</taxon>
        <taxon>Pentapetalae</taxon>
        <taxon>rosids</taxon>
        <taxon>malvids</taxon>
        <taxon>Brassicales</taxon>
        <taxon>Brassicaceae</taxon>
        <taxon>Camelineae</taxon>
        <taxon>Arabidopsis</taxon>
    </lineage>
</organism>